<accession>Q7H8K9</accession>
<organism>
    <name type="scientific">Ipomoea aquatica</name>
    <name type="common">Water spinach</name>
    <name type="synonym">Ipomoea reptans</name>
    <dbReference type="NCBI Taxonomy" id="89636"/>
    <lineage>
        <taxon>Eukaryota</taxon>
        <taxon>Viridiplantae</taxon>
        <taxon>Streptophyta</taxon>
        <taxon>Embryophyta</taxon>
        <taxon>Tracheophyta</taxon>
        <taxon>Spermatophyta</taxon>
        <taxon>Magnoliopsida</taxon>
        <taxon>eudicotyledons</taxon>
        <taxon>Gunneridae</taxon>
        <taxon>Pentapetalae</taxon>
        <taxon>asterids</taxon>
        <taxon>lamiids</taxon>
        <taxon>Solanales</taxon>
        <taxon>Convolvulaceae</taxon>
        <taxon>Ipomoeeae</taxon>
        <taxon>Ipomoea</taxon>
    </lineage>
</organism>
<evidence type="ECO:0000255" key="1">
    <source>
        <dbReference type="HAMAP-Rule" id="MF_00643"/>
    </source>
</evidence>
<comment type="function">
    <text evidence="1">This b-type cytochrome is tightly associated with the reaction center of photosystem II (PSII). PSII is a light-driven water:plastoquinone oxidoreductase that uses light energy to abstract electrons from H(2)O, generating O(2) and a proton gradient subsequently used for ATP formation. It consists of a core antenna complex that captures photons, and an electron transfer chain that converts photonic excitation into a charge separation.</text>
</comment>
<comment type="cofactor">
    <cofactor evidence="1">
        <name>heme b</name>
        <dbReference type="ChEBI" id="CHEBI:60344"/>
    </cofactor>
    <text evidence="1">With its partner (PsbE) binds heme. PSII binds additional chlorophylls, carotenoids and specific lipids.</text>
</comment>
<comment type="subunit">
    <text evidence="1">Heterodimer of an alpha subunit and a beta subunit. PSII is composed of 1 copy each of membrane proteins PsbA, PsbB, PsbC, PsbD, PsbE, PsbF, PsbH, PsbI, PsbJ, PsbK, PsbL, PsbM, PsbT, PsbX, PsbY, PsbZ, Psb30/Ycf12, at least 3 peripheral proteins of the oxygen-evolving complex and a large number of cofactors. It forms dimeric complexes.</text>
</comment>
<comment type="subcellular location">
    <subcellularLocation>
        <location evidence="1">Plastid</location>
        <location evidence="1">Chloroplast thylakoid membrane</location>
        <topology evidence="1">Single-pass membrane protein</topology>
    </subcellularLocation>
</comment>
<comment type="similarity">
    <text evidence="1">Belongs to the PsbE/PsbF family.</text>
</comment>
<keyword id="KW-0150">Chloroplast</keyword>
<keyword id="KW-0249">Electron transport</keyword>
<keyword id="KW-0349">Heme</keyword>
<keyword id="KW-0408">Iron</keyword>
<keyword id="KW-0472">Membrane</keyword>
<keyword id="KW-0479">Metal-binding</keyword>
<keyword id="KW-0602">Photosynthesis</keyword>
<keyword id="KW-0604">Photosystem II</keyword>
<keyword id="KW-0934">Plastid</keyword>
<keyword id="KW-0793">Thylakoid</keyword>
<keyword id="KW-0812">Transmembrane</keyword>
<keyword id="KW-1133">Transmembrane helix</keyword>
<keyword id="KW-0813">Transport</keyword>
<gene>
    <name evidence="1" type="primary">psbF</name>
</gene>
<geneLocation type="chloroplast"/>
<sequence>MTIDRTYPIFTVRWLAVHGLAVPTVFFLGSISAMQFIQR</sequence>
<dbReference type="EMBL" id="AY100856">
    <property type="protein sequence ID" value="AAM55546.1"/>
    <property type="molecule type" value="Genomic_DNA"/>
</dbReference>
<dbReference type="RefSeq" id="YP_010128512.1">
    <property type="nucleotide sequence ID" value="NC_056300.1"/>
</dbReference>
<dbReference type="SMR" id="Q7H8K9"/>
<dbReference type="GeneID" id="65335555"/>
<dbReference type="GO" id="GO:0009535">
    <property type="term" value="C:chloroplast thylakoid membrane"/>
    <property type="evidence" value="ECO:0007669"/>
    <property type="project" value="UniProtKB-SubCell"/>
</dbReference>
<dbReference type="GO" id="GO:0009539">
    <property type="term" value="C:photosystem II reaction center"/>
    <property type="evidence" value="ECO:0007669"/>
    <property type="project" value="InterPro"/>
</dbReference>
<dbReference type="GO" id="GO:0009055">
    <property type="term" value="F:electron transfer activity"/>
    <property type="evidence" value="ECO:0007669"/>
    <property type="project" value="UniProtKB-UniRule"/>
</dbReference>
<dbReference type="GO" id="GO:0020037">
    <property type="term" value="F:heme binding"/>
    <property type="evidence" value="ECO:0007669"/>
    <property type="project" value="InterPro"/>
</dbReference>
<dbReference type="GO" id="GO:0005506">
    <property type="term" value="F:iron ion binding"/>
    <property type="evidence" value="ECO:0007669"/>
    <property type="project" value="UniProtKB-UniRule"/>
</dbReference>
<dbReference type="GO" id="GO:0009767">
    <property type="term" value="P:photosynthetic electron transport chain"/>
    <property type="evidence" value="ECO:0007669"/>
    <property type="project" value="InterPro"/>
</dbReference>
<dbReference type="HAMAP" id="MF_00643">
    <property type="entry name" value="PSII_PsbF"/>
    <property type="match status" value="1"/>
</dbReference>
<dbReference type="InterPro" id="IPR006241">
    <property type="entry name" value="PSII_cyt_b559_bsu"/>
</dbReference>
<dbReference type="InterPro" id="IPR006216">
    <property type="entry name" value="PSII_cyt_b559_CS"/>
</dbReference>
<dbReference type="InterPro" id="IPR013081">
    <property type="entry name" value="PSII_cyt_b559_N"/>
</dbReference>
<dbReference type="NCBIfam" id="TIGR01333">
    <property type="entry name" value="cyt_b559_beta"/>
    <property type="match status" value="1"/>
</dbReference>
<dbReference type="Pfam" id="PF00283">
    <property type="entry name" value="Cytochrom_B559"/>
    <property type="match status" value="1"/>
</dbReference>
<dbReference type="PIRSF" id="PIRSF000037">
    <property type="entry name" value="PsbF"/>
    <property type="match status" value="1"/>
</dbReference>
<dbReference type="SUPFAM" id="SSF161045">
    <property type="entry name" value="Cytochrome b559 subunits"/>
    <property type="match status" value="1"/>
</dbReference>
<dbReference type="PROSITE" id="PS00537">
    <property type="entry name" value="CYTOCHROME_B559"/>
    <property type="match status" value="1"/>
</dbReference>
<proteinExistence type="inferred from homology"/>
<name>PSBF_IPOAQ</name>
<protein>
    <recommendedName>
        <fullName evidence="1">Cytochrome b559 subunit beta</fullName>
    </recommendedName>
    <alternativeName>
        <fullName evidence="1">PSII reaction center subunit VI</fullName>
    </alternativeName>
</protein>
<feature type="chain" id="PRO_0000200404" description="Cytochrome b559 subunit beta">
    <location>
        <begin position="1"/>
        <end position="39"/>
    </location>
</feature>
<feature type="transmembrane region" description="Helical" evidence="1">
    <location>
        <begin position="14"/>
        <end position="30"/>
    </location>
</feature>
<feature type="binding site" description="axial binding residue" evidence="1">
    <location>
        <position position="18"/>
    </location>
    <ligand>
        <name>heme</name>
        <dbReference type="ChEBI" id="CHEBI:30413"/>
        <note>ligand shared with alpha subunit</note>
    </ligand>
    <ligandPart>
        <name>Fe</name>
        <dbReference type="ChEBI" id="CHEBI:18248"/>
    </ligandPart>
</feature>
<reference key="1">
    <citation type="journal article" date="2002" name="Am. J. Bot.">
        <title>Monophyly of the Convolvulaceae and circumscription of their major lineages based on DNA sequences of multiple chloroplast loci.</title>
        <authorList>
            <person name="Stefanovic S."/>
            <person name="Krueger L."/>
            <person name="Olmstead R.G."/>
        </authorList>
        <dbReference type="AGRICOLA" id="IND23320510"/>
    </citation>
    <scope>NUCLEOTIDE SEQUENCE [GENOMIC DNA]</scope>
</reference>